<feature type="transit peptide" description="Chloroplast" evidence="2">
    <location>
        <begin position="1"/>
        <end position="74"/>
    </location>
</feature>
<feature type="chain" id="PRO_0000333288" description="Serotonin N-acetyltransferase 1, chloroplastic">
    <location>
        <begin position="75"/>
        <end position="254"/>
    </location>
</feature>
<feature type="domain" description="N-acetyltransferase" evidence="3">
    <location>
        <begin position="111"/>
        <end position="254"/>
    </location>
</feature>
<feature type="strand" evidence="12">
    <location>
        <begin position="94"/>
        <end position="100"/>
    </location>
</feature>
<feature type="strand" evidence="12">
    <location>
        <begin position="110"/>
        <end position="114"/>
    </location>
</feature>
<feature type="helix" evidence="12">
    <location>
        <begin position="121"/>
        <end position="130"/>
    </location>
</feature>
<feature type="helix" evidence="12">
    <location>
        <begin position="138"/>
        <end position="146"/>
    </location>
</feature>
<feature type="strand" evidence="12">
    <location>
        <begin position="149"/>
        <end position="157"/>
    </location>
</feature>
<feature type="strand" evidence="12">
    <location>
        <begin position="169"/>
        <end position="179"/>
    </location>
</feature>
<feature type="strand" evidence="12">
    <location>
        <begin position="181"/>
        <end position="192"/>
    </location>
</feature>
<feature type="helix" evidence="12">
    <location>
        <begin position="194"/>
        <end position="196"/>
    </location>
</feature>
<feature type="turn" evidence="14">
    <location>
        <begin position="197"/>
        <end position="200"/>
    </location>
</feature>
<feature type="helix" evidence="12">
    <location>
        <begin position="201"/>
        <end position="215"/>
    </location>
</feature>
<feature type="strand" evidence="12">
    <location>
        <begin position="220"/>
        <end position="223"/>
    </location>
</feature>
<feature type="helix" evidence="12">
    <location>
        <begin position="227"/>
        <end position="229"/>
    </location>
</feature>
<feature type="helix" evidence="12">
    <location>
        <begin position="230"/>
        <end position="236"/>
    </location>
</feature>
<feature type="strand" evidence="13">
    <location>
        <begin position="238"/>
        <end position="241"/>
    </location>
</feature>
<feature type="helix" evidence="12">
    <location>
        <begin position="242"/>
        <end position="244"/>
    </location>
</feature>
<feature type="strand" evidence="13">
    <location>
        <begin position="246"/>
        <end position="251"/>
    </location>
</feature>
<reference key="1">
    <citation type="journal article" date="2005" name="Mol. Genet. Genomics">
        <title>A fine physical map of the rice chromosome 5.</title>
        <authorList>
            <person name="Cheng C.-H."/>
            <person name="Chung M.C."/>
            <person name="Liu S.-M."/>
            <person name="Chen S.-K."/>
            <person name="Kao F.Y."/>
            <person name="Lin S.-J."/>
            <person name="Hsiao S.-H."/>
            <person name="Tseng I.C."/>
            <person name="Hsing Y.-I.C."/>
            <person name="Wu H.-P."/>
            <person name="Chen C.-S."/>
            <person name="Shaw J.-F."/>
            <person name="Wu J."/>
            <person name="Matsumoto T."/>
            <person name="Sasaki T."/>
            <person name="Chen H.-C."/>
            <person name="Chow T.-Y."/>
        </authorList>
    </citation>
    <scope>NUCLEOTIDE SEQUENCE [LARGE SCALE GENOMIC DNA]</scope>
    <source>
        <strain>cv. Nipponbare</strain>
    </source>
</reference>
<reference key="2">
    <citation type="journal article" date="2005" name="Nature">
        <title>The map-based sequence of the rice genome.</title>
        <authorList>
            <consortium name="International rice genome sequencing project (IRGSP)"/>
        </authorList>
    </citation>
    <scope>NUCLEOTIDE SEQUENCE [LARGE SCALE GENOMIC DNA]</scope>
    <source>
        <strain>cv. Nipponbare</strain>
    </source>
</reference>
<reference key="3">
    <citation type="journal article" date="2008" name="Nucleic Acids Res.">
        <title>The rice annotation project database (RAP-DB): 2008 update.</title>
        <authorList>
            <consortium name="The rice annotation project (RAP)"/>
        </authorList>
    </citation>
    <scope>GENOME REANNOTATION</scope>
    <source>
        <strain>cv. Nipponbare</strain>
    </source>
</reference>
<reference key="4">
    <citation type="journal article" date="2013" name="Rice">
        <title>Improvement of the Oryza sativa Nipponbare reference genome using next generation sequence and optical map data.</title>
        <authorList>
            <person name="Kawahara Y."/>
            <person name="de la Bastide M."/>
            <person name="Hamilton J.P."/>
            <person name="Kanamori H."/>
            <person name="McCombie W.R."/>
            <person name="Ouyang S."/>
            <person name="Schwartz D.C."/>
            <person name="Tanaka T."/>
            <person name="Wu J."/>
            <person name="Zhou S."/>
            <person name="Childs K.L."/>
            <person name="Davidson R.M."/>
            <person name="Lin H."/>
            <person name="Quesada-Ocampo L."/>
            <person name="Vaillancourt B."/>
            <person name="Sakai H."/>
            <person name="Lee S.S."/>
            <person name="Kim J."/>
            <person name="Numa H."/>
            <person name="Itoh T."/>
            <person name="Buell C.R."/>
            <person name="Matsumoto T."/>
        </authorList>
    </citation>
    <scope>GENOME REANNOTATION</scope>
    <source>
        <strain>cv. Nipponbare</strain>
    </source>
</reference>
<reference key="5">
    <citation type="journal article" date="2005" name="PLoS Biol.">
        <title>The genomes of Oryza sativa: a history of duplications.</title>
        <authorList>
            <person name="Yu J."/>
            <person name="Wang J."/>
            <person name="Lin W."/>
            <person name="Li S."/>
            <person name="Li H."/>
            <person name="Zhou J."/>
            <person name="Ni P."/>
            <person name="Dong W."/>
            <person name="Hu S."/>
            <person name="Zeng C."/>
            <person name="Zhang J."/>
            <person name="Zhang Y."/>
            <person name="Li R."/>
            <person name="Xu Z."/>
            <person name="Li S."/>
            <person name="Li X."/>
            <person name="Zheng H."/>
            <person name="Cong L."/>
            <person name="Lin L."/>
            <person name="Yin J."/>
            <person name="Geng J."/>
            <person name="Li G."/>
            <person name="Shi J."/>
            <person name="Liu J."/>
            <person name="Lv H."/>
            <person name="Li J."/>
            <person name="Wang J."/>
            <person name="Deng Y."/>
            <person name="Ran L."/>
            <person name="Shi X."/>
            <person name="Wang X."/>
            <person name="Wu Q."/>
            <person name="Li C."/>
            <person name="Ren X."/>
            <person name="Wang J."/>
            <person name="Wang X."/>
            <person name="Li D."/>
            <person name="Liu D."/>
            <person name="Zhang X."/>
            <person name="Ji Z."/>
            <person name="Zhao W."/>
            <person name="Sun Y."/>
            <person name="Zhang Z."/>
            <person name="Bao J."/>
            <person name="Han Y."/>
            <person name="Dong L."/>
            <person name="Ji J."/>
            <person name="Chen P."/>
            <person name="Wu S."/>
            <person name="Liu J."/>
            <person name="Xiao Y."/>
            <person name="Bu D."/>
            <person name="Tan J."/>
            <person name="Yang L."/>
            <person name="Ye C."/>
            <person name="Zhang J."/>
            <person name="Xu J."/>
            <person name="Zhou Y."/>
            <person name="Yu Y."/>
            <person name="Zhang B."/>
            <person name="Zhuang S."/>
            <person name="Wei H."/>
            <person name="Liu B."/>
            <person name="Lei M."/>
            <person name="Yu H."/>
            <person name="Li Y."/>
            <person name="Xu H."/>
            <person name="Wei S."/>
            <person name="He X."/>
            <person name="Fang L."/>
            <person name="Zhang Z."/>
            <person name="Zhang Y."/>
            <person name="Huang X."/>
            <person name="Su Z."/>
            <person name="Tong W."/>
            <person name="Li J."/>
            <person name="Tong Z."/>
            <person name="Li S."/>
            <person name="Ye J."/>
            <person name="Wang L."/>
            <person name="Fang L."/>
            <person name="Lei T."/>
            <person name="Chen C.-S."/>
            <person name="Chen H.-C."/>
            <person name="Xu Z."/>
            <person name="Li H."/>
            <person name="Huang H."/>
            <person name="Zhang F."/>
            <person name="Xu H."/>
            <person name="Li N."/>
            <person name="Zhao C."/>
            <person name="Li S."/>
            <person name="Dong L."/>
            <person name="Huang Y."/>
            <person name="Li L."/>
            <person name="Xi Y."/>
            <person name="Qi Q."/>
            <person name="Li W."/>
            <person name="Zhang B."/>
            <person name="Hu W."/>
            <person name="Zhang Y."/>
            <person name="Tian X."/>
            <person name="Jiao Y."/>
            <person name="Liang X."/>
            <person name="Jin J."/>
            <person name="Gao L."/>
            <person name="Zheng W."/>
            <person name="Hao B."/>
            <person name="Liu S.-M."/>
            <person name="Wang W."/>
            <person name="Yuan L."/>
            <person name="Cao M."/>
            <person name="McDermott J."/>
            <person name="Samudrala R."/>
            <person name="Wang J."/>
            <person name="Wong G.K.-S."/>
            <person name="Yang H."/>
        </authorList>
    </citation>
    <scope>NUCLEOTIDE SEQUENCE [LARGE SCALE GENOMIC DNA]</scope>
    <source>
        <strain>cv. Nipponbare</strain>
    </source>
</reference>
<reference key="6">
    <citation type="journal article" date="2003" name="Science">
        <title>Collection, mapping, and annotation of over 28,000 cDNA clones from japonica rice.</title>
        <authorList>
            <consortium name="The rice full-length cDNA consortium"/>
        </authorList>
    </citation>
    <scope>NUCLEOTIDE SEQUENCE [LARGE SCALE MRNA]</scope>
    <source>
        <strain>cv. Nipponbare</strain>
    </source>
</reference>
<reference key="7">
    <citation type="journal article" date="2013" name="J. Pineal Res.">
        <title>Molecular cloning of rice serotonin N-acetyltransferase, the penultimate gene in plant melatonin biosynthesis.</title>
        <authorList>
            <person name="Kang K."/>
            <person name="Lee K."/>
            <person name="Park S."/>
            <person name="Byeon Y."/>
            <person name="Back K."/>
        </authorList>
    </citation>
    <scope>FUNCTION</scope>
    <scope>CATALYTIC ACTIVITY</scope>
    <scope>BIOPHYSICOCHEMICAL PROPERTIES</scope>
    <scope>TISSUE SPECIFICITY</scope>
</reference>
<reference key="8">
    <citation type="journal article" date="2014" name="J. Pineal Res.">
        <title>Cellular localization and kinetics of the rice melatonin biosynthetic enzymes SNAT and ASMT.</title>
        <authorList>
            <person name="Byeon Y."/>
            <person name="Lee H.Y."/>
            <person name="Lee K."/>
            <person name="Park S."/>
            <person name="Back K."/>
        </authorList>
    </citation>
    <scope>FUNCTION</scope>
    <scope>CATALYTIC ACTIVITY</scope>
    <scope>BIOPHYSICOCHEMICAL PROPERTIES</scope>
    <scope>SUBCELLULAR LOCATION</scope>
</reference>
<reference key="9">
    <citation type="journal article" date="2016" name="J. Pineal Res.">
        <title>Cloning and characterization of the serotonin N-acetyltransferase-2 gene (SNAT2) in rice (Oryza sativa).</title>
        <authorList>
            <person name="Byeon Y."/>
            <person name="Lee H.Y."/>
            <person name="Back K."/>
        </authorList>
    </citation>
    <scope>FUNCTION</scope>
    <scope>CATALYTIC ACTIVITY</scope>
    <scope>INDUCTION</scope>
</reference>
<reference key="10">
    <citation type="journal article" date="2017" name="J. Pineal Res.">
        <title>Overexpression of rice serotonin N-acetyltransferase 1 in transgenic rice plants confers resistance to cadmium and senescence and increases grain yield.</title>
        <authorList>
            <person name="Lee K."/>
            <person name="Back K."/>
        </authorList>
    </citation>
    <scope>FUNCTION</scope>
</reference>
<reference key="11">
    <citation type="journal article" date="2020" name="J. Adv. Res.">
        <title>Crystal structure of Oryza sativa TDC reveals the substrate specificity for TDC-mediated melatonin biosynthesis.</title>
        <authorList>
            <person name="Zhou Y."/>
            <person name="Liao L."/>
            <person name="Liu X."/>
            <person name="Liu B."/>
            <person name="Chen X."/>
            <person name="Guo Y."/>
            <person name="Huang C."/>
            <person name="Zhao Y."/>
            <person name="Zeng Z."/>
        </authorList>
    </citation>
    <scope>X-RAY CRYSTALLOGRAPHY (1.79 ANGSTROMS) OF 92-254</scope>
</reference>
<comment type="function">
    <text evidence="4 5 6 7">Catalyzes the N-acetylation of serotonin into N-acetylserotonin, the penultimate step in the synthesis of melatonin (PubMed:22998587, PubMed:24134674, PubMed:27121038, PubMed:28118490). Catalyzes in vitro the N-acetylation of tryptamine to produce N-acetyltryptamine, 5-methoxytryptamine to produce melatonin and tyramine to produce N-acetyltyramine (PubMed:27121038).</text>
</comment>
<comment type="catalytic activity">
    <reaction evidence="4 5 6">
        <text>serotonin + acetyl-CoA = N-acetylserotonin + CoA + H(+)</text>
        <dbReference type="Rhea" id="RHEA:25217"/>
        <dbReference type="ChEBI" id="CHEBI:15378"/>
        <dbReference type="ChEBI" id="CHEBI:17697"/>
        <dbReference type="ChEBI" id="CHEBI:57287"/>
        <dbReference type="ChEBI" id="CHEBI:57288"/>
        <dbReference type="ChEBI" id="CHEBI:350546"/>
        <dbReference type="EC" id="2.3.1.87"/>
    </reaction>
    <physiologicalReaction direction="left-to-right" evidence="4 5 6">
        <dbReference type="Rhea" id="RHEA:25218"/>
    </physiologicalReaction>
</comment>
<comment type="catalytic activity">
    <reaction evidence="6">
        <text>tyramine + acetyl-CoA = N-acetyltyramine + CoA + H(+)</text>
        <dbReference type="Rhea" id="RHEA:66136"/>
        <dbReference type="ChEBI" id="CHEBI:15378"/>
        <dbReference type="ChEBI" id="CHEBI:57287"/>
        <dbReference type="ChEBI" id="CHEBI:57288"/>
        <dbReference type="ChEBI" id="CHEBI:125610"/>
        <dbReference type="ChEBI" id="CHEBI:327995"/>
    </reaction>
    <physiologicalReaction direction="left-to-right" evidence="6">
        <dbReference type="Rhea" id="RHEA:66137"/>
    </physiologicalReaction>
</comment>
<comment type="catalytic activity">
    <reaction evidence="6">
        <text>tryptamine + acetyl-CoA = N-acetyltryptamine + CoA + H(+)</text>
        <dbReference type="Rhea" id="RHEA:66196"/>
        <dbReference type="ChEBI" id="CHEBI:15378"/>
        <dbReference type="ChEBI" id="CHEBI:55515"/>
        <dbReference type="ChEBI" id="CHEBI:57287"/>
        <dbReference type="ChEBI" id="CHEBI:57288"/>
        <dbReference type="ChEBI" id="CHEBI:57887"/>
    </reaction>
    <physiologicalReaction direction="left-to-right" evidence="6">
        <dbReference type="Rhea" id="RHEA:66197"/>
    </physiologicalReaction>
</comment>
<comment type="catalytic activity">
    <reaction evidence="6">
        <text>5-methoxytryptamine + acetyl-CoA = melatonin + CoA + H(+)</text>
        <dbReference type="Rhea" id="RHEA:66144"/>
        <dbReference type="ChEBI" id="CHEBI:15378"/>
        <dbReference type="ChEBI" id="CHEBI:16796"/>
        <dbReference type="ChEBI" id="CHEBI:57287"/>
        <dbReference type="ChEBI" id="CHEBI:57288"/>
        <dbReference type="ChEBI" id="CHEBI:166874"/>
    </reaction>
    <physiologicalReaction direction="left-to-right" evidence="6">
        <dbReference type="Rhea" id="RHEA:66145"/>
    </physiologicalReaction>
</comment>
<comment type="biophysicochemical properties">
    <kinetics>
        <KM evidence="5">270 uM for serotonin (at 55 degrees Celsius)</KM>
        <KM evidence="4">385 uM for serotonin (at 30 degrees Celsius)</KM>
        <KM evidence="4">836 uM for tryptamine (at 30 degrees Celsius)</KM>
        <KM evidence="4">375 uM for 5-methoxytryptamine (at 30 degrees Celsius)</KM>
        <Vmax evidence="5">3.3 nmol/min/mg enzyme with serotonin as substrate (at 55 degrees Celsius)</Vmax>
        <Vmax evidence="4">282.0 pmol/min/mg enzyme with serotonin as substrate (at 30 degrees Celsius)</Vmax>
        <Vmax evidence="4">480.0 pmol/min/mg enzyme with tryptamine as substrate (at 30 degrees Celsius)</Vmax>
        <Vmax evidence="4">390.0 pmol/min/mg enzyme with 5-methoxytryptamine as substrate (at 30 degrees Celsius)</Vmax>
    </kinetics>
    <phDependence>
        <text evidence="4">Optimum pH is 8.8.</text>
    </phDependence>
    <temperatureDependence>
        <text evidence="5">Optimum temperature is 55 degrees Celsius.</text>
    </temperatureDependence>
</comment>
<comment type="pathway">
    <text evidence="10">Aromatic compound metabolism; melatonin biosynthesis; melatonin from serotonin: step 1/2.</text>
</comment>
<comment type="subcellular location">
    <subcellularLocation>
        <location evidence="5">Plastid</location>
        <location evidence="5">Chloroplast</location>
    </subcellularLocation>
    <subcellularLocation>
        <location evidence="1">Nucleus</location>
    </subcellularLocation>
</comment>
<comment type="tissue specificity">
    <text evidence="4">Expressed in roots and shoots.</text>
</comment>
<comment type="induction">
    <text evidence="6">Down-regulated by cadmium.</text>
</comment>
<comment type="miscellaneous">
    <text evidence="7">Plants overexpressing SNAT1 exhibit tolerance to cadmium, delayed leaf senescence, and increased grain yield due to increased panicle number.</text>
</comment>
<comment type="similarity">
    <text evidence="10">Belongs to the acetyltransferase family.</text>
</comment>
<gene>
    <name evidence="9" type="primary">SNAT1</name>
    <name evidence="8" type="synonym">GNAT5</name>
    <name evidence="10" type="synonym">NSI</name>
    <name evidence="8" type="synonym">SNAT</name>
    <name type="ordered locus">Os05g0481000</name>
    <name type="ordered locus">LOC_Os05g40260</name>
    <name type="ORF">OsJ_018182</name>
    <name evidence="11" type="ORF">OsJ_18949</name>
    <name type="ORF">OSJNBa0095J22.4</name>
</gene>
<sequence>MAPAASASASAVVTPSSFRCVPTASCGLGARGKAPAPRRLLHDHAQGKKRAAATWSLKAGLWDSLRSGFLKSNNSTETVEPPSAPIEEEEPLPEELVLLERTLADGSTEQIIFSSAGDVNVYDLQALCDKVGWPRRPLTKIAASLRNSYLVATLHSVTMPSKAEGEERKQLIGMARATSDHAFNATIWDVLVDPSYQGQGLGKALMEKVIRTLLQRDISNITLFADNKVVDFYKNLGFEADPQGIKGMFWYPRF</sequence>
<dbReference type="EC" id="2.3.1.87" evidence="4 5 6"/>
<dbReference type="EMBL" id="AC137619">
    <property type="protein sequence ID" value="AAW56866.1"/>
    <property type="molecule type" value="Genomic_DNA"/>
</dbReference>
<dbReference type="EMBL" id="AP008211">
    <property type="protein sequence ID" value="BAF17772.2"/>
    <property type="molecule type" value="Genomic_DNA"/>
</dbReference>
<dbReference type="EMBL" id="AP014961">
    <property type="protein sequence ID" value="BAS94577.1"/>
    <property type="molecule type" value="Genomic_DNA"/>
</dbReference>
<dbReference type="EMBL" id="CM000142">
    <property type="protein sequence ID" value="EEE64117.1"/>
    <property type="molecule type" value="Genomic_DNA"/>
</dbReference>
<dbReference type="EMBL" id="AK059369">
    <property type="protein sequence ID" value="BAG86973.1"/>
    <property type="molecule type" value="mRNA"/>
</dbReference>
<dbReference type="RefSeq" id="NP_001389503.1">
    <property type="nucleotide sequence ID" value="NM_001402574.1"/>
</dbReference>
<dbReference type="RefSeq" id="XP_015637887.1">
    <property type="nucleotide sequence ID" value="XM_015782401.1"/>
</dbReference>
<dbReference type="PDB" id="6K5M">
    <property type="method" value="X-ray"/>
    <property type="resolution" value="1.79 A"/>
    <property type="chains" value="A=92-254"/>
</dbReference>
<dbReference type="PDB" id="7DAI">
    <property type="method" value="X-ray"/>
    <property type="resolution" value="2.30 A"/>
    <property type="chains" value="A/B/C=91-254"/>
</dbReference>
<dbReference type="PDB" id="7DAJ">
    <property type="method" value="X-ray"/>
    <property type="resolution" value="2.30 A"/>
    <property type="chains" value="A/B=91-254"/>
</dbReference>
<dbReference type="PDB" id="7DAK">
    <property type="method" value="X-ray"/>
    <property type="resolution" value="2.80 A"/>
    <property type="chains" value="A/B=91-254"/>
</dbReference>
<dbReference type="PDB" id="7DAL">
    <property type="method" value="X-ray"/>
    <property type="resolution" value="2.50 A"/>
    <property type="chains" value="A/B=91-254"/>
</dbReference>
<dbReference type="PDBsum" id="6K5M"/>
<dbReference type="PDBsum" id="7DAI"/>
<dbReference type="PDBsum" id="7DAJ"/>
<dbReference type="PDBsum" id="7DAK"/>
<dbReference type="PDBsum" id="7DAL"/>
<dbReference type="SMR" id="Q5KQI6"/>
<dbReference type="FunCoup" id="Q5KQI6">
    <property type="interactions" value="863"/>
</dbReference>
<dbReference type="STRING" id="39947.Q5KQI6"/>
<dbReference type="PaxDb" id="39947-Q5KQI6"/>
<dbReference type="EnsemblPlants" id="Os05t0481000-01">
    <property type="protein sequence ID" value="Os05t0481000-01"/>
    <property type="gene ID" value="Os05g0481000"/>
</dbReference>
<dbReference type="GeneID" id="4339123"/>
<dbReference type="Gramene" id="Os05t0481000-01">
    <property type="protein sequence ID" value="Os05t0481000-01"/>
    <property type="gene ID" value="Os05g0481000"/>
</dbReference>
<dbReference type="KEGG" id="dosa:Os05g0481000"/>
<dbReference type="eggNOG" id="ENOG502QSCQ">
    <property type="taxonomic scope" value="Eukaryota"/>
</dbReference>
<dbReference type="HOGENOM" id="CLU_086503_0_0_1"/>
<dbReference type="InParanoid" id="Q5KQI6"/>
<dbReference type="OMA" id="QALCDKT"/>
<dbReference type="OrthoDB" id="10039976at2759"/>
<dbReference type="BRENDA" id="2.3.1.87">
    <property type="organism ID" value="8948"/>
</dbReference>
<dbReference type="SABIO-RK" id="Q5KQI6"/>
<dbReference type="UniPathway" id="UPA00837">
    <property type="reaction ID" value="UER00815"/>
</dbReference>
<dbReference type="Proteomes" id="UP000000763">
    <property type="component" value="Chromosome 5"/>
</dbReference>
<dbReference type="Proteomes" id="UP000007752">
    <property type="component" value="Chromosome 5"/>
</dbReference>
<dbReference type="Proteomes" id="UP000059680">
    <property type="component" value="Chromosome 5"/>
</dbReference>
<dbReference type="ExpressionAtlas" id="Q5KQI6">
    <property type="expression patterns" value="baseline and differential"/>
</dbReference>
<dbReference type="GO" id="GO:0009507">
    <property type="term" value="C:chloroplast"/>
    <property type="evidence" value="ECO:0000314"/>
    <property type="project" value="UniProtKB"/>
</dbReference>
<dbReference type="GO" id="GO:0005737">
    <property type="term" value="C:cytoplasm"/>
    <property type="evidence" value="ECO:0000318"/>
    <property type="project" value="GO_Central"/>
</dbReference>
<dbReference type="GO" id="GO:0005634">
    <property type="term" value="C:nucleus"/>
    <property type="evidence" value="ECO:0007669"/>
    <property type="project" value="UniProtKB-SubCell"/>
</dbReference>
<dbReference type="GO" id="GO:0004059">
    <property type="term" value="F:aralkylamine N-acetyltransferase activity"/>
    <property type="evidence" value="ECO:0000314"/>
    <property type="project" value="UniProtKB"/>
</dbReference>
<dbReference type="GO" id="GO:0004468">
    <property type="term" value="F:L-lysine N-acetyltransferase activity, acting on acetyl phosphate as donor"/>
    <property type="evidence" value="ECO:0007669"/>
    <property type="project" value="EnsemblPlants"/>
</dbReference>
<dbReference type="GO" id="GO:0008080">
    <property type="term" value="F:N-acetyltransferase activity"/>
    <property type="evidence" value="ECO:0000318"/>
    <property type="project" value="GO_Central"/>
</dbReference>
<dbReference type="GO" id="GO:0007623">
    <property type="term" value="P:circadian rhythm"/>
    <property type="evidence" value="ECO:0007669"/>
    <property type="project" value="EnsemblPlants"/>
</dbReference>
<dbReference type="GO" id="GO:0050832">
    <property type="term" value="P:defense response to fungus"/>
    <property type="evidence" value="ECO:0007669"/>
    <property type="project" value="EnsemblPlants"/>
</dbReference>
<dbReference type="GO" id="GO:0030187">
    <property type="term" value="P:melatonin biosynthetic process"/>
    <property type="evidence" value="ECO:0000314"/>
    <property type="project" value="UniProtKB"/>
</dbReference>
<dbReference type="GO" id="GO:0048354">
    <property type="term" value="P:mucilage biosynthetic process involved in seed coat development"/>
    <property type="evidence" value="ECO:0007669"/>
    <property type="project" value="EnsemblPlants"/>
</dbReference>
<dbReference type="GO" id="GO:0010187">
    <property type="term" value="P:negative regulation of seed germination"/>
    <property type="evidence" value="ECO:0007669"/>
    <property type="project" value="EnsemblPlants"/>
</dbReference>
<dbReference type="GO" id="GO:0062055">
    <property type="term" value="P:photosynthetic state transition"/>
    <property type="evidence" value="ECO:0007669"/>
    <property type="project" value="EnsemblPlants"/>
</dbReference>
<dbReference type="GO" id="GO:0006515">
    <property type="term" value="P:protein quality control for misfolded or incompletely synthesized proteins"/>
    <property type="evidence" value="ECO:0007669"/>
    <property type="project" value="EnsemblPlants"/>
</dbReference>
<dbReference type="GO" id="GO:0031537">
    <property type="term" value="P:regulation of anthocyanin metabolic process"/>
    <property type="evidence" value="ECO:0007669"/>
    <property type="project" value="EnsemblPlants"/>
</dbReference>
<dbReference type="GO" id="GO:2000028">
    <property type="term" value="P:regulation of photoperiodism, flowering"/>
    <property type="evidence" value="ECO:0007669"/>
    <property type="project" value="EnsemblPlants"/>
</dbReference>
<dbReference type="GO" id="GO:2000904">
    <property type="term" value="P:regulation of starch metabolic process"/>
    <property type="evidence" value="ECO:0007669"/>
    <property type="project" value="EnsemblPlants"/>
</dbReference>
<dbReference type="GO" id="GO:0090333">
    <property type="term" value="P:regulation of stomatal closure"/>
    <property type="evidence" value="ECO:0007669"/>
    <property type="project" value="EnsemblPlants"/>
</dbReference>
<dbReference type="GO" id="GO:0009409">
    <property type="term" value="P:response to cold"/>
    <property type="evidence" value="ECO:0007669"/>
    <property type="project" value="EnsemblPlants"/>
</dbReference>
<dbReference type="GO" id="GO:0009644">
    <property type="term" value="P:response to high light intensity"/>
    <property type="evidence" value="ECO:0007669"/>
    <property type="project" value="EnsemblPlants"/>
</dbReference>
<dbReference type="GO" id="GO:1904880">
    <property type="term" value="P:response to hydrogen sulfide"/>
    <property type="evidence" value="ECO:0007669"/>
    <property type="project" value="EnsemblPlants"/>
</dbReference>
<dbReference type="GO" id="GO:0010555">
    <property type="term" value="P:response to mannitol"/>
    <property type="evidence" value="ECO:0007669"/>
    <property type="project" value="EnsemblPlants"/>
</dbReference>
<dbReference type="GO" id="GO:0006970">
    <property type="term" value="P:response to osmotic stress"/>
    <property type="evidence" value="ECO:0007669"/>
    <property type="project" value="EnsemblPlants"/>
</dbReference>
<dbReference type="GO" id="GO:0010344">
    <property type="term" value="P:seed oilbody biogenesis"/>
    <property type="evidence" value="ECO:0007669"/>
    <property type="project" value="EnsemblPlants"/>
</dbReference>
<dbReference type="GO" id="GO:0042428">
    <property type="term" value="P:serotonin metabolic process"/>
    <property type="evidence" value="ECO:0007669"/>
    <property type="project" value="EnsemblPlants"/>
</dbReference>
<dbReference type="GO" id="GO:0010027">
    <property type="term" value="P:thylakoid membrane organization"/>
    <property type="evidence" value="ECO:0007669"/>
    <property type="project" value="EnsemblPlants"/>
</dbReference>
<dbReference type="GO" id="GO:0046739">
    <property type="term" value="P:transport of virus in multicellular host"/>
    <property type="evidence" value="ECO:0007669"/>
    <property type="project" value="EnsemblPlants"/>
</dbReference>
<dbReference type="CDD" id="cd04301">
    <property type="entry name" value="NAT_SF"/>
    <property type="match status" value="1"/>
</dbReference>
<dbReference type="FunFam" id="3.40.630.30:FF:000059">
    <property type="entry name" value="Putative acetyltransferase NSI"/>
    <property type="match status" value="1"/>
</dbReference>
<dbReference type="Gene3D" id="3.40.630.30">
    <property type="match status" value="1"/>
</dbReference>
<dbReference type="InterPro" id="IPR016181">
    <property type="entry name" value="Acyl_CoA_acyltransferase"/>
</dbReference>
<dbReference type="InterPro" id="IPR000182">
    <property type="entry name" value="GNAT_dom"/>
</dbReference>
<dbReference type="InterPro" id="IPR045039">
    <property type="entry name" value="NSI-like"/>
</dbReference>
<dbReference type="PANTHER" id="PTHR43626">
    <property type="entry name" value="ACYL-COA N-ACYLTRANSFERASE"/>
    <property type="match status" value="1"/>
</dbReference>
<dbReference type="PANTHER" id="PTHR43626:SF4">
    <property type="entry name" value="GCN5-RELATED N-ACETYLTRANSFERASE 2, CHLOROPLASTIC"/>
    <property type="match status" value="1"/>
</dbReference>
<dbReference type="Pfam" id="PF00583">
    <property type="entry name" value="Acetyltransf_1"/>
    <property type="match status" value="1"/>
</dbReference>
<dbReference type="SUPFAM" id="SSF55729">
    <property type="entry name" value="Acyl-CoA N-acyltransferases (Nat)"/>
    <property type="match status" value="1"/>
</dbReference>
<dbReference type="PROSITE" id="PS51186">
    <property type="entry name" value="GNAT"/>
    <property type="match status" value="1"/>
</dbReference>
<protein>
    <recommendedName>
        <fullName evidence="9">Serotonin N-acetyltransferase 1, chloroplastic</fullName>
        <shortName evidence="9">OsSNAT1</shortName>
        <ecNumber evidence="4 5 6">2.3.1.87</ecNumber>
    </recommendedName>
    <alternativeName>
        <fullName evidence="10">Acetyltransferase NSI homolog</fullName>
    </alternativeName>
    <alternativeName>
        <fullName evidence="10">Nuclear shuttle protein-interacting protein homolog</fullName>
    </alternativeName>
</protein>
<organism>
    <name type="scientific">Oryza sativa subsp. japonica</name>
    <name type="common">Rice</name>
    <dbReference type="NCBI Taxonomy" id="39947"/>
    <lineage>
        <taxon>Eukaryota</taxon>
        <taxon>Viridiplantae</taxon>
        <taxon>Streptophyta</taxon>
        <taxon>Embryophyta</taxon>
        <taxon>Tracheophyta</taxon>
        <taxon>Spermatophyta</taxon>
        <taxon>Magnoliopsida</taxon>
        <taxon>Liliopsida</taxon>
        <taxon>Poales</taxon>
        <taxon>Poaceae</taxon>
        <taxon>BOP clade</taxon>
        <taxon>Oryzoideae</taxon>
        <taxon>Oryzeae</taxon>
        <taxon>Oryzinae</taxon>
        <taxon>Oryza</taxon>
        <taxon>Oryza sativa</taxon>
    </lineage>
</organism>
<name>SNAT1_ORYSJ</name>
<accession>Q5KQI6</accession>
<accession>A3B560</accession>
<accession>B7E3M6</accession>
<accession>Q0DHA1</accession>
<proteinExistence type="evidence at protein level"/>
<keyword id="KW-0002">3D-structure</keyword>
<keyword id="KW-0012">Acyltransferase</keyword>
<keyword id="KW-0150">Chloroplast</keyword>
<keyword id="KW-0471">Melatonin biosynthesis</keyword>
<keyword id="KW-0539">Nucleus</keyword>
<keyword id="KW-0934">Plastid</keyword>
<keyword id="KW-1185">Reference proteome</keyword>
<keyword id="KW-0808">Transferase</keyword>
<keyword id="KW-0809">Transit peptide</keyword>
<evidence type="ECO:0000250" key="1">
    <source>
        <dbReference type="UniProtKB" id="Q7X9V3"/>
    </source>
</evidence>
<evidence type="ECO:0000255" key="2"/>
<evidence type="ECO:0000255" key="3">
    <source>
        <dbReference type="PROSITE-ProRule" id="PRU00532"/>
    </source>
</evidence>
<evidence type="ECO:0000269" key="4">
    <source>
    </source>
</evidence>
<evidence type="ECO:0000269" key="5">
    <source>
    </source>
</evidence>
<evidence type="ECO:0000269" key="6">
    <source>
    </source>
</evidence>
<evidence type="ECO:0000269" key="7">
    <source>
    </source>
</evidence>
<evidence type="ECO:0000303" key="8">
    <source>
    </source>
</evidence>
<evidence type="ECO:0000303" key="9">
    <source>
    </source>
</evidence>
<evidence type="ECO:0000305" key="10"/>
<evidence type="ECO:0000312" key="11">
    <source>
        <dbReference type="EMBL" id="EEE64117.1"/>
    </source>
</evidence>
<evidence type="ECO:0007829" key="12">
    <source>
        <dbReference type="PDB" id="6K5M"/>
    </source>
</evidence>
<evidence type="ECO:0007829" key="13">
    <source>
        <dbReference type="PDB" id="7DAJ"/>
    </source>
</evidence>
<evidence type="ECO:0007829" key="14">
    <source>
        <dbReference type="PDB" id="7DAL"/>
    </source>
</evidence>